<reference key="1">
    <citation type="journal article" date="2006" name="Proc. Natl. Acad. Sci. U.S.A.">
        <title>The complete genome sequence of a chronic atrophic gastritis Helicobacter pylori strain: evolution during disease progression.</title>
        <authorList>
            <person name="Oh J.D."/>
            <person name="Kling-Baeckhed H."/>
            <person name="Giannakis M."/>
            <person name="Xu J."/>
            <person name="Fulton R.S."/>
            <person name="Fulton L.A."/>
            <person name="Cordum H.S."/>
            <person name="Wang C."/>
            <person name="Elliott G."/>
            <person name="Edwards J."/>
            <person name="Mardis E.R."/>
            <person name="Engstrand L.G."/>
            <person name="Gordon J.I."/>
        </authorList>
    </citation>
    <scope>NUCLEOTIDE SEQUENCE [LARGE SCALE GENOMIC DNA]</scope>
    <source>
        <strain>HPAG1</strain>
    </source>
</reference>
<sequence>MARIAGVDLPKKKRVEYALTYIYGIGLKSSREILEAVGISFDKRVHELSEDEVSSIAKKIQQSYLVEGDLRKKVQMDIKSLMDLGNYRGIRHRKGLPVRGQTTKNNARTRKGKKKTVGSK</sequence>
<keyword id="KW-0687">Ribonucleoprotein</keyword>
<keyword id="KW-0689">Ribosomal protein</keyword>
<keyword id="KW-0694">RNA-binding</keyword>
<keyword id="KW-0699">rRNA-binding</keyword>
<keyword id="KW-0820">tRNA-binding</keyword>
<protein>
    <recommendedName>
        <fullName evidence="1">Small ribosomal subunit protein uS13</fullName>
    </recommendedName>
    <alternativeName>
        <fullName evidence="3">30S ribosomal protein S13</fullName>
    </alternativeName>
</protein>
<accession>Q1CRW4</accession>
<proteinExistence type="inferred from homology"/>
<organism>
    <name type="scientific">Helicobacter pylori (strain HPAG1)</name>
    <dbReference type="NCBI Taxonomy" id="357544"/>
    <lineage>
        <taxon>Bacteria</taxon>
        <taxon>Pseudomonadati</taxon>
        <taxon>Campylobacterota</taxon>
        <taxon>Epsilonproteobacteria</taxon>
        <taxon>Campylobacterales</taxon>
        <taxon>Helicobacteraceae</taxon>
        <taxon>Helicobacter</taxon>
    </lineage>
</organism>
<dbReference type="EMBL" id="CP000241">
    <property type="protein sequence ID" value="ABF85308.1"/>
    <property type="molecule type" value="Genomic_DNA"/>
</dbReference>
<dbReference type="RefSeq" id="WP_000090809.1">
    <property type="nucleotide sequence ID" value="NC_008086.1"/>
</dbReference>
<dbReference type="SMR" id="Q1CRW4"/>
<dbReference type="GeneID" id="93237573"/>
<dbReference type="KEGG" id="hpa:HPAG1_1241"/>
<dbReference type="HOGENOM" id="CLU_103849_1_2_7"/>
<dbReference type="GO" id="GO:0005829">
    <property type="term" value="C:cytosol"/>
    <property type="evidence" value="ECO:0007669"/>
    <property type="project" value="TreeGrafter"/>
</dbReference>
<dbReference type="GO" id="GO:0015935">
    <property type="term" value="C:small ribosomal subunit"/>
    <property type="evidence" value="ECO:0007669"/>
    <property type="project" value="TreeGrafter"/>
</dbReference>
<dbReference type="GO" id="GO:0019843">
    <property type="term" value="F:rRNA binding"/>
    <property type="evidence" value="ECO:0007669"/>
    <property type="project" value="UniProtKB-UniRule"/>
</dbReference>
<dbReference type="GO" id="GO:0003735">
    <property type="term" value="F:structural constituent of ribosome"/>
    <property type="evidence" value="ECO:0007669"/>
    <property type="project" value="InterPro"/>
</dbReference>
<dbReference type="GO" id="GO:0000049">
    <property type="term" value="F:tRNA binding"/>
    <property type="evidence" value="ECO:0007669"/>
    <property type="project" value="UniProtKB-UniRule"/>
</dbReference>
<dbReference type="GO" id="GO:0006412">
    <property type="term" value="P:translation"/>
    <property type="evidence" value="ECO:0007669"/>
    <property type="project" value="UniProtKB-UniRule"/>
</dbReference>
<dbReference type="FunFam" id="1.10.8.50:FF:000001">
    <property type="entry name" value="30S ribosomal protein S13"/>
    <property type="match status" value="1"/>
</dbReference>
<dbReference type="FunFam" id="4.10.910.10:FF:000001">
    <property type="entry name" value="30S ribosomal protein S13"/>
    <property type="match status" value="1"/>
</dbReference>
<dbReference type="Gene3D" id="1.10.8.50">
    <property type="match status" value="1"/>
</dbReference>
<dbReference type="Gene3D" id="4.10.910.10">
    <property type="entry name" value="30s ribosomal protein s13, domain 2"/>
    <property type="match status" value="1"/>
</dbReference>
<dbReference type="HAMAP" id="MF_01315">
    <property type="entry name" value="Ribosomal_uS13"/>
    <property type="match status" value="1"/>
</dbReference>
<dbReference type="InterPro" id="IPR027437">
    <property type="entry name" value="Rbsml_uS13_C"/>
</dbReference>
<dbReference type="InterPro" id="IPR001892">
    <property type="entry name" value="Ribosomal_uS13"/>
</dbReference>
<dbReference type="InterPro" id="IPR010979">
    <property type="entry name" value="Ribosomal_uS13-like_H2TH"/>
</dbReference>
<dbReference type="InterPro" id="IPR019980">
    <property type="entry name" value="Ribosomal_uS13_bac-type"/>
</dbReference>
<dbReference type="InterPro" id="IPR018269">
    <property type="entry name" value="Ribosomal_uS13_CS"/>
</dbReference>
<dbReference type="NCBIfam" id="TIGR03631">
    <property type="entry name" value="uS13_bact"/>
    <property type="match status" value="1"/>
</dbReference>
<dbReference type="PANTHER" id="PTHR10871">
    <property type="entry name" value="30S RIBOSOMAL PROTEIN S13/40S RIBOSOMAL PROTEIN S18"/>
    <property type="match status" value="1"/>
</dbReference>
<dbReference type="PANTHER" id="PTHR10871:SF1">
    <property type="entry name" value="SMALL RIBOSOMAL SUBUNIT PROTEIN US13M"/>
    <property type="match status" value="1"/>
</dbReference>
<dbReference type="Pfam" id="PF00416">
    <property type="entry name" value="Ribosomal_S13"/>
    <property type="match status" value="1"/>
</dbReference>
<dbReference type="PIRSF" id="PIRSF002134">
    <property type="entry name" value="Ribosomal_S13"/>
    <property type="match status" value="1"/>
</dbReference>
<dbReference type="SUPFAM" id="SSF46946">
    <property type="entry name" value="S13-like H2TH domain"/>
    <property type="match status" value="1"/>
</dbReference>
<dbReference type="PROSITE" id="PS00646">
    <property type="entry name" value="RIBOSOMAL_S13_1"/>
    <property type="match status" value="1"/>
</dbReference>
<dbReference type="PROSITE" id="PS50159">
    <property type="entry name" value="RIBOSOMAL_S13_2"/>
    <property type="match status" value="1"/>
</dbReference>
<feature type="chain" id="PRO_0000306620" description="Small ribosomal subunit protein uS13">
    <location>
        <begin position="1"/>
        <end position="120"/>
    </location>
</feature>
<feature type="region of interest" description="Disordered" evidence="2">
    <location>
        <begin position="93"/>
        <end position="120"/>
    </location>
</feature>
<feature type="compositionally biased region" description="Basic residues" evidence="2">
    <location>
        <begin position="107"/>
        <end position="120"/>
    </location>
</feature>
<name>RS13_HELPH</name>
<evidence type="ECO:0000255" key="1">
    <source>
        <dbReference type="HAMAP-Rule" id="MF_01315"/>
    </source>
</evidence>
<evidence type="ECO:0000256" key="2">
    <source>
        <dbReference type="SAM" id="MobiDB-lite"/>
    </source>
</evidence>
<evidence type="ECO:0000305" key="3"/>
<gene>
    <name evidence="1" type="primary">rpsM</name>
    <name type="ordered locus">HPAG1_1241</name>
</gene>
<comment type="function">
    <text evidence="1">Located at the top of the head of the 30S subunit, it contacts several helices of the 16S rRNA. In the 70S ribosome it contacts the 23S rRNA (bridge B1a) and protein L5 of the 50S subunit (bridge B1b), connecting the 2 subunits; these bridges are implicated in subunit movement. Contacts the tRNAs in the A and P-sites.</text>
</comment>
<comment type="subunit">
    <text evidence="1">Part of the 30S ribosomal subunit. Forms a loose heterodimer with protein S19. Forms two bridges to the 50S subunit in the 70S ribosome.</text>
</comment>
<comment type="similarity">
    <text evidence="1">Belongs to the universal ribosomal protein uS13 family.</text>
</comment>